<organism>
    <name type="scientific">Leuconostoc citreum (strain KM20)</name>
    <dbReference type="NCBI Taxonomy" id="349519"/>
    <lineage>
        <taxon>Bacteria</taxon>
        <taxon>Bacillati</taxon>
        <taxon>Bacillota</taxon>
        <taxon>Bacilli</taxon>
        <taxon>Lactobacillales</taxon>
        <taxon>Lactobacillaceae</taxon>
        <taxon>Leuconostoc</taxon>
    </lineage>
</organism>
<gene>
    <name evidence="1" type="primary">argS</name>
    <name type="ordered locus">LCK_01007</name>
</gene>
<evidence type="ECO:0000255" key="1">
    <source>
        <dbReference type="HAMAP-Rule" id="MF_00123"/>
    </source>
</evidence>
<comment type="catalytic activity">
    <reaction evidence="1">
        <text>tRNA(Arg) + L-arginine + ATP = L-arginyl-tRNA(Arg) + AMP + diphosphate</text>
        <dbReference type="Rhea" id="RHEA:20301"/>
        <dbReference type="Rhea" id="RHEA-COMP:9658"/>
        <dbReference type="Rhea" id="RHEA-COMP:9673"/>
        <dbReference type="ChEBI" id="CHEBI:30616"/>
        <dbReference type="ChEBI" id="CHEBI:32682"/>
        <dbReference type="ChEBI" id="CHEBI:33019"/>
        <dbReference type="ChEBI" id="CHEBI:78442"/>
        <dbReference type="ChEBI" id="CHEBI:78513"/>
        <dbReference type="ChEBI" id="CHEBI:456215"/>
        <dbReference type="EC" id="6.1.1.19"/>
    </reaction>
</comment>
<comment type="subunit">
    <text evidence="1">Monomer.</text>
</comment>
<comment type="subcellular location">
    <subcellularLocation>
        <location evidence="1">Cytoplasm</location>
    </subcellularLocation>
</comment>
<comment type="similarity">
    <text evidence="1">Belongs to the class-I aminoacyl-tRNA synthetase family.</text>
</comment>
<dbReference type="EC" id="6.1.1.19" evidence="1"/>
<dbReference type="EMBL" id="DQ489736">
    <property type="protein sequence ID" value="ACA82834.1"/>
    <property type="molecule type" value="Genomic_DNA"/>
</dbReference>
<dbReference type="RefSeq" id="WP_012305268.1">
    <property type="nucleotide sequence ID" value="NC_010471.1"/>
</dbReference>
<dbReference type="SMR" id="B1MZ82"/>
<dbReference type="STRING" id="349519.LCK_01007"/>
<dbReference type="KEGG" id="lci:LCK_01007"/>
<dbReference type="eggNOG" id="COG0018">
    <property type="taxonomic scope" value="Bacteria"/>
</dbReference>
<dbReference type="HOGENOM" id="CLU_006406_6_1_9"/>
<dbReference type="OrthoDB" id="9805987at2"/>
<dbReference type="Proteomes" id="UP000002166">
    <property type="component" value="Chromosome"/>
</dbReference>
<dbReference type="GO" id="GO:0005737">
    <property type="term" value="C:cytoplasm"/>
    <property type="evidence" value="ECO:0007669"/>
    <property type="project" value="UniProtKB-SubCell"/>
</dbReference>
<dbReference type="GO" id="GO:0004814">
    <property type="term" value="F:arginine-tRNA ligase activity"/>
    <property type="evidence" value="ECO:0007669"/>
    <property type="project" value="UniProtKB-UniRule"/>
</dbReference>
<dbReference type="GO" id="GO:0005524">
    <property type="term" value="F:ATP binding"/>
    <property type="evidence" value="ECO:0007669"/>
    <property type="project" value="UniProtKB-UniRule"/>
</dbReference>
<dbReference type="GO" id="GO:0006420">
    <property type="term" value="P:arginyl-tRNA aminoacylation"/>
    <property type="evidence" value="ECO:0007669"/>
    <property type="project" value="UniProtKB-UniRule"/>
</dbReference>
<dbReference type="CDD" id="cd07956">
    <property type="entry name" value="Anticodon_Ia_Arg"/>
    <property type="match status" value="1"/>
</dbReference>
<dbReference type="CDD" id="cd00671">
    <property type="entry name" value="ArgRS_core"/>
    <property type="match status" value="1"/>
</dbReference>
<dbReference type="FunFam" id="3.40.50.620:FF:000116">
    <property type="entry name" value="Arginine--tRNA ligase"/>
    <property type="match status" value="1"/>
</dbReference>
<dbReference type="FunFam" id="1.10.730.10:FF:000006">
    <property type="entry name" value="Arginyl-tRNA synthetase 2, mitochondrial"/>
    <property type="match status" value="1"/>
</dbReference>
<dbReference type="Gene3D" id="3.30.1360.70">
    <property type="entry name" value="Arginyl tRNA synthetase N-terminal domain"/>
    <property type="match status" value="1"/>
</dbReference>
<dbReference type="Gene3D" id="3.40.50.620">
    <property type="entry name" value="HUPs"/>
    <property type="match status" value="1"/>
</dbReference>
<dbReference type="Gene3D" id="1.10.730.10">
    <property type="entry name" value="Isoleucyl-tRNA Synthetase, Domain 1"/>
    <property type="match status" value="1"/>
</dbReference>
<dbReference type="HAMAP" id="MF_00123">
    <property type="entry name" value="Arg_tRNA_synth"/>
    <property type="match status" value="1"/>
</dbReference>
<dbReference type="InterPro" id="IPR001278">
    <property type="entry name" value="Arg-tRNA-ligase"/>
</dbReference>
<dbReference type="InterPro" id="IPR005148">
    <property type="entry name" value="Arg-tRNA-synth_N"/>
</dbReference>
<dbReference type="InterPro" id="IPR036695">
    <property type="entry name" value="Arg-tRNA-synth_N_sf"/>
</dbReference>
<dbReference type="InterPro" id="IPR035684">
    <property type="entry name" value="ArgRS_core"/>
</dbReference>
<dbReference type="InterPro" id="IPR008909">
    <property type="entry name" value="DALR_anticod-bd"/>
</dbReference>
<dbReference type="InterPro" id="IPR014729">
    <property type="entry name" value="Rossmann-like_a/b/a_fold"/>
</dbReference>
<dbReference type="InterPro" id="IPR009080">
    <property type="entry name" value="tRNAsynth_Ia_anticodon-bd"/>
</dbReference>
<dbReference type="NCBIfam" id="TIGR00456">
    <property type="entry name" value="argS"/>
    <property type="match status" value="1"/>
</dbReference>
<dbReference type="PANTHER" id="PTHR11956:SF5">
    <property type="entry name" value="ARGININE--TRNA LIGASE, CYTOPLASMIC"/>
    <property type="match status" value="1"/>
</dbReference>
<dbReference type="PANTHER" id="PTHR11956">
    <property type="entry name" value="ARGINYL-TRNA SYNTHETASE"/>
    <property type="match status" value="1"/>
</dbReference>
<dbReference type="Pfam" id="PF03485">
    <property type="entry name" value="Arg_tRNA_synt_N"/>
    <property type="match status" value="1"/>
</dbReference>
<dbReference type="Pfam" id="PF05746">
    <property type="entry name" value="DALR_1"/>
    <property type="match status" value="1"/>
</dbReference>
<dbReference type="Pfam" id="PF00750">
    <property type="entry name" value="tRNA-synt_1d"/>
    <property type="match status" value="1"/>
</dbReference>
<dbReference type="PRINTS" id="PR01038">
    <property type="entry name" value="TRNASYNTHARG"/>
</dbReference>
<dbReference type="SMART" id="SM01016">
    <property type="entry name" value="Arg_tRNA_synt_N"/>
    <property type="match status" value="1"/>
</dbReference>
<dbReference type="SMART" id="SM00836">
    <property type="entry name" value="DALR_1"/>
    <property type="match status" value="1"/>
</dbReference>
<dbReference type="SUPFAM" id="SSF47323">
    <property type="entry name" value="Anticodon-binding domain of a subclass of class I aminoacyl-tRNA synthetases"/>
    <property type="match status" value="1"/>
</dbReference>
<dbReference type="SUPFAM" id="SSF55190">
    <property type="entry name" value="Arginyl-tRNA synthetase (ArgRS), N-terminal 'additional' domain"/>
    <property type="match status" value="1"/>
</dbReference>
<dbReference type="SUPFAM" id="SSF52374">
    <property type="entry name" value="Nucleotidylyl transferase"/>
    <property type="match status" value="1"/>
</dbReference>
<keyword id="KW-0030">Aminoacyl-tRNA synthetase</keyword>
<keyword id="KW-0067">ATP-binding</keyword>
<keyword id="KW-0963">Cytoplasm</keyword>
<keyword id="KW-0436">Ligase</keyword>
<keyword id="KW-0547">Nucleotide-binding</keyword>
<keyword id="KW-0648">Protein biosynthesis</keyword>
<keyword id="KW-1185">Reference proteome</keyword>
<reference key="1">
    <citation type="journal article" date="2008" name="J. Bacteriol.">
        <title>Complete genome sequence of Leuconostoc citreum KM20.</title>
        <authorList>
            <person name="Kim J.F."/>
            <person name="Jeong H."/>
            <person name="Lee J.-S."/>
            <person name="Choi S.-H."/>
            <person name="Ha M."/>
            <person name="Hur C.-G."/>
            <person name="Kim J.-S."/>
            <person name="Lee S."/>
            <person name="Park H.-S."/>
            <person name="Park Y.-H."/>
            <person name="Oh T.K."/>
        </authorList>
    </citation>
    <scope>NUCLEOTIDE SEQUENCE [LARGE SCALE GENOMIC DNA]</scope>
    <source>
        <strain>KM20</strain>
    </source>
</reference>
<accession>B1MZ82</accession>
<proteinExistence type="inferred from homology"/>
<name>SYR_LEUCK</name>
<sequence>MTDNKSIITSLSQVLPDIPVAEIAAKLESPKSSDLGDVAFPTFTLAKLLRQAPQQIASDIVNRIDQSNFEKVVATGPYVNFFLDKKMTSQATLKTILTQGAAFGDNNDGDGANVTIDMSSPNIAKPMSMGHLRSTVIGNALANITAKNGYHPIKINHLGDWGTQFGKLIYAYKTWGTEAEVKADPIATLLRYYVEFHEKAKIDDSLNDAGRAWFKKLEDGDEEAHQLWTWFRAESLKEFTEIYDRLEISFDSFNGEAFYNDKMDKVVDMLAEKSLLVESQGAQIVDLSDINPNLTPAMIKRTDGATLYMTRDLAAAVYRKETYNFAKSLYVVGGEQREHFVQMKAVLSLMGFDWADDVEHIAFGLITFNGKKMSTRKGDVVLLKDVLNDAHDLALKQIQEKNPDLADKATVAEQVGAGAVVFHDLMNDRTNNFDFNLEEVVRFEGDTGPYVQYTNARAKSILRKANTAVSVDELNLDDTATWDIITTLNQFPTIVQRAWQQREASIIAKYALSLSRAFNKYYANSKILLPDDQLNARLALVKAVTIILSESLRLLGVKAPEEM</sequence>
<protein>
    <recommendedName>
        <fullName evidence="1">Arginine--tRNA ligase</fullName>
        <ecNumber evidence="1">6.1.1.19</ecNumber>
    </recommendedName>
    <alternativeName>
        <fullName evidence="1">Arginyl-tRNA synthetase</fullName>
        <shortName evidence="1">ArgRS</shortName>
    </alternativeName>
</protein>
<feature type="chain" id="PRO_1000095378" description="Arginine--tRNA ligase">
    <location>
        <begin position="1"/>
        <end position="563"/>
    </location>
</feature>
<feature type="short sequence motif" description="'HIGH' region">
    <location>
        <begin position="121"/>
        <end position="131"/>
    </location>
</feature>